<protein>
    <recommendedName>
        <fullName evidence="1">Uridine kinase</fullName>
        <ecNumber evidence="1">2.7.1.48</ecNumber>
    </recommendedName>
    <alternativeName>
        <fullName evidence="1">Cytidine monophosphokinase</fullName>
    </alternativeName>
    <alternativeName>
        <fullName evidence="1">Uridine monophosphokinase</fullName>
    </alternativeName>
</protein>
<organism>
    <name type="scientific">Shewanella denitrificans (strain OS217 / ATCC BAA-1090 / DSM 15013)</name>
    <dbReference type="NCBI Taxonomy" id="318161"/>
    <lineage>
        <taxon>Bacteria</taxon>
        <taxon>Pseudomonadati</taxon>
        <taxon>Pseudomonadota</taxon>
        <taxon>Gammaproteobacteria</taxon>
        <taxon>Alteromonadales</taxon>
        <taxon>Shewanellaceae</taxon>
        <taxon>Shewanella</taxon>
    </lineage>
</organism>
<name>URK_SHEDO</name>
<reference key="1">
    <citation type="submission" date="2006-03" db="EMBL/GenBank/DDBJ databases">
        <title>Complete sequence of Shewanella denitrificans OS217.</title>
        <authorList>
            <consortium name="US DOE Joint Genome Institute"/>
            <person name="Copeland A."/>
            <person name="Lucas S."/>
            <person name="Lapidus A."/>
            <person name="Barry K."/>
            <person name="Detter J.C."/>
            <person name="Glavina del Rio T."/>
            <person name="Hammon N."/>
            <person name="Israni S."/>
            <person name="Dalin E."/>
            <person name="Tice H."/>
            <person name="Pitluck S."/>
            <person name="Brettin T."/>
            <person name="Bruce D."/>
            <person name="Han C."/>
            <person name="Tapia R."/>
            <person name="Gilna P."/>
            <person name="Kiss H."/>
            <person name="Schmutz J."/>
            <person name="Larimer F."/>
            <person name="Land M."/>
            <person name="Hauser L."/>
            <person name="Kyrpides N."/>
            <person name="Lykidis A."/>
            <person name="Richardson P."/>
        </authorList>
    </citation>
    <scope>NUCLEOTIDE SEQUENCE [LARGE SCALE GENOMIC DNA]</scope>
    <source>
        <strain>OS217 / ATCC BAA-1090 / DSM 15013</strain>
    </source>
</reference>
<sequence length="212" mass="24147">MNSQQCVIIGIAGASASGKSLIAKTIFDELRRDLGTDQIGVINEDAYYKDQSHMSMEERVQTNYDHPKALDHQLLCSHLKQLKAGQAADIPCYSYTEHTRISETIHMTPKKVIILEGILLLTDPKLRDLMDASVFMDTPLDICFLRRLTRDVAERDRTMESVISQYKKTVRPMFLQFIEPSKQYADIIVPRGGKNRIATDILKTRIQHLLAK</sequence>
<comment type="catalytic activity">
    <reaction evidence="1">
        <text>uridine + ATP = UMP + ADP + H(+)</text>
        <dbReference type="Rhea" id="RHEA:16825"/>
        <dbReference type="ChEBI" id="CHEBI:15378"/>
        <dbReference type="ChEBI" id="CHEBI:16704"/>
        <dbReference type="ChEBI" id="CHEBI:30616"/>
        <dbReference type="ChEBI" id="CHEBI:57865"/>
        <dbReference type="ChEBI" id="CHEBI:456216"/>
        <dbReference type="EC" id="2.7.1.48"/>
    </reaction>
</comment>
<comment type="catalytic activity">
    <reaction evidence="1">
        <text>cytidine + ATP = CMP + ADP + H(+)</text>
        <dbReference type="Rhea" id="RHEA:24674"/>
        <dbReference type="ChEBI" id="CHEBI:15378"/>
        <dbReference type="ChEBI" id="CHEBI:17562"/>
        <dbReference type="ChEBI" id="CHEBI:30616"/>
        <dbReference type="ChEBI" id="CHEBI:60377"/>
        <dbReference type="ChEBI" id="CHEBI:456216"/>
        <dbReference type="EC" id="2.7.1.48"/>
    </reaction>
</comment>
<comment type="pathway">
    <text evidence="1">Pyrimidine metabolism; CTP biosynthesis via salvage pathway; CTP from cytidine: step 1/3.</text>
</comment>
<comment type="pathway">
    <text evidence="1">Pyrimidine metabolism; UMP biosynthesis via salvage pathway; UMP from uridine: step 1/1.</text>
</comment>
<comment type="subcellular location">
    <subcellularLocation>
        <location evidence="1">Cytoplasm</location>
    </subcellularLocation>
</comment>
<comment type="similarity">
    <text evidence="1">Belongs to the uridine kinase family.</text>
</comment>
<keyword id="KW-0067">ATP-binding</keyword>
<keyword id="KW-0963">Cytoplasm</keyword>
<keyword id="KW-0418">Kinase</keyword>
<keyword id="KW-0547">Nucleotide-binding</keyword>
<keyword id="KW-1185">Reference proteome</keyword>
<keyword id="KW-0808">Transferase</keyword>
<accession>Q12MJ0</accession>
<proteinExistence type="inferred from homology"/>
<evidence type="ECO:0000255" key="1">
    <source>
        <dbReference type="HAMAP-Rule" id="MF_00551"/>
    </source>
</evidence>
<feature type="chain" id="PRO_1000017893" description="Uridine kinase">
    <location>
        <begin position="1"/>
        <end position="212"/>
    </location>
</feature>
<feature type="binding site" evidence="1">
    <location>
        <begin position="13"/>
        <end position="20"/>
    </location>
    <ligand>
        <name>ATP</name>
        <dbReference type="ChEBI" id="CHEBI:30616"/>
    </ligand>
</feature>
<dbReference type="EC" id="2.7.1.48" evidence="1"/>
<dbReference type="EMBL" id="CP000302">
    <property type="protein sequence ID" value="ABE55336.1"/>
    <property type="molecule type" value="Genomic_DNA"/>
</dbReference>
<dbReference type="RefSeq" id="WP_011496492.1">
    <property type="nucleotide sequence ID" value="NC_007954.1"/>
</dbReference>
<dbReference type="SMR" id="Q12MJ0"/>
<dbReference type="STRING" id="318161.Sden_2054"/>
<dbReference type="KEGG" id="sdn:Sden_2054"/>
<dbReference type="eggNOG" id="COG0572">
    <property type="taxonomic scope" value="Bacteria"/>
</dbReference>
<dbReference type="HOGENOM" id="CLU_021278_1_2_6"/>
<dbReference type="OrthoDB" id="9777642at2"/>
<dbReference type="UniPathway" id="UPA00574">
    <property type="reaction ID" value="UER00637"/>
</dbReference>
<dbReference type="UniPathway" id="UPA00579">
    <property type="reaction ID" value="UER00640"/>
</dbReference>
<dbReference type="Proteomes" id="UP000001982">
    <property type="component" value="Chromosome"/>
</dbReference>
<dbReference type="GO" id="GO:0005737">
    <property type="term" value="C:cytoplasm"/>
    <property type="evidence" value="ECO:0007669"/>
    <property type="project" value="UniProtKB-SubCell"/>
</dbReference>
<dbReference type="GO" id="GO:0005524">
    <property type="term" value="F:ATP binding"/>
    <property type="evidence" value="ECO:0007669"/>
    <property type="project" value="UniProtKB-UniRule"/>
</dbReference>
<dbReference type="GO" id="GO:0043771">
    <property type="term" value="F:cytidine kinase activity"/>
    <property type="evidence" value="ECO:0007669"/>
    <property type="project" value="RHEA"/>
</dbReference>
<dbReference type="GO" id="GO:0004849">
    <property type="term" value="F:uridine kinase activity"/>
    <property type="evidence" value="ECO:0007669"/>
    <property type="project" value="UniProtKB-UniRule"/>
</dbReference>
<dbReference type="GO" id="GO:0044211">
    <property type="term" value="P:CTP salvage"/>
    <property type="evidence" value="ECO:0007669"/>
    <property type="project" value="UniProtKB-UniRule"/>
</dbReference>
<dbReference type="GO" id="GO:0044206">
    <property type="term" value="P:UMP salvage"/>
    <property type="evidence" value="ECO:0007669"/>
    <property type="project" value="UniProtKB-UniRule"/>
</dbReference>
<dbReference type="CDD" id="cd02023">
    <property type="entry name" value="UMPK"/>
    <property type="match status" value="1"/>
</dbReference>
<dbReference type="Gene3D" id="3.40.50.300">
    <property type="entry name" value="P-loop containing nucleotide triphosphate hydrolases"/>
    <property type="match status" value="1"/>
</dbReference>
<dbReference type="HAMAP" id="MF_00551">
    <property type="entry name" value="Uridine_kinase"/>
    <property type="match status" value="1"/>
</dbReference>
<dbReference type="InterPro" id="IPR027417">
    <property type="entry name" value="P-loop_NTPase"/>
</dbReference>
<dbReference type="InterPro" id="IPR006083">
    <property type="entry name" value="PRK/URK"/>
</dbReference>
<dbReference type="InterPro" id="IPR026008">
    <property type="entry name" value="Uridine_kinase"/>
</dbReference>
<dbReference type="InterPro" id="IPR000764">
    <property type="entry name" value="Uridine_kinase-like"/>
</dbReference>
<dbReference type="NCBIfam" id="NF004018">
    <property type="entry name" value="PRK05480.1"/>
    <property type="match status" value="1"/>
</dbReference>
<dbReference type="NCBIfam" id="TIGR00235">
    <property type="entry name" value="udk"/>
    <property type="match status" value="1"/>
</dbReference>
<dbReference type="PANTHER" id="PTHR10285">
    <property type="entry name" value="URIDINE KINASE"/>
    <property type="match status" value="1"/>
</dbReference>
<dbReference type="Pfam" id="PF00485">
    <property type="entry name" value="PRK"/>
    <property type="match status" value="1"/>
</dbReference>
<dbReference type="PRINTS" id="PR00988">
    <property type="entry name" value="URIDINKINASE"/>
</dbReference>
<dbReference type="SUPFAM" id="SSF52540">
    <property type="entry name" value="P-loop containing nucleoside triphosphate hydrolases"/>
    <property type="match status" value="1"/>
</dbReference>
<gene>
    <name evidence="1" type="primary">udk</name>
    <name type="ordered locus">Sden_2054</name>
</gene>